<sequence>MEGRSDFVATSQSGSEMSHSETRNRTGMNARKRKFACVECRQQKSKCDAHERAPEPCTKCAKKNVPCILKRDFRRTYKRARNEAIEKRFKELTRTLTNLTSDEILKKIEEEQEIVLDNSNFTKEKVKQLRKSAFETTEIEPRSYKTLRGEPISYSTNRRHTDSSPLTLLSSSTNFDPVHSTNVMTDDQLKCLPKSLGDVYLSSSDIAELFQEFATKYHQFLPVVDLSKGAERIYHLSPCLFWVILLIGLRRKFGATDLMTRLSVLVKSVLSEITISPIIRYTPSDKDEPVLNVASVYSVQAFLLYTFWPPLTSSLSADTSWNTIGTAMFQALRVGLNCAGFSKEYASANSELVNEQIRTWICCNVVSQTVASSFGFPAYVSFDYLVISSIRVPNSKSQVDIPNELRQMAQIARFENQIVNTMNSTPASVTGMVSQEEKQPLLHVLNQQLSQLEISLEENNLDDIRKFLLLVAKVHLLTYYFTDVTSQSAGKSNGNIYEGSYSIMELDTSFETKRGLVKVYNAAVNFLIHANSMWEHDPTIIKYFPGLFVLNIWQSACIISKLIHSSLHSMLDVNSGKKAYNNAISLTFNASVLKYDMAYRSSGIMRSIWSLFANMYDAWKNDQKEGGGRLNNDFNLGITIKSRMSVNVFFDCLYILKEKCGMAKLERETKVSTAYNVDEEEEEDEDEEGEEEEEEEELSSKVPENMDSQQLRTRKFTNVRHPEKKARKIIETIPLDPNPINAGSTSSGSSLTTPNSQVANTISYRGILNKMSPREQLNHANLDSSVSTDIKDTEAVNEPLPIGRNAEHPANQPPLSITQMQENTLPATQANSSLLETYPIVQSNPVTTTIKESPNSIMAGWDNWESDMVWRDVDILMNEFAFNPKV</sequence>
<accession>P08638</accession>
<accession>D6VZ85</accession>
<dbReference type="EMBL" id="Y00360">
    <property type="protein sequence ID" value="CAA68438.1"/>
    <property type="molecule type" value="Genomic_DNA"/>
</dbReference>
<dbReference type="EMBL" id="M17222">
    <property type="protein sequence ID" value="AAA34741.1"/>
    <property type="molecule type" value="Genomic_DNA"/>
</dbReference>
<dbReference type="EMBL" id="U22382">
    <property type="protein sequence ID" value="AAB67526.1"/>
    <property type="molecule type" value="Genomic_DNA"/>
</dbReference>
<dbReference type="EMBL" id="BK006945">
    <property type="protein sequence ID" value="DAA09751.1"/>
    <property type="molecule type" value="Genomic_DNA"/>
</dbReference>
<dbReference type="PIR" id="S00638">
    <property type="entry name" value="RGBYL3"/>
</dbReference>
<dbReference type="RefSeq" id="NP_013556.3">
    <property type="nucleotide sequence ID" value="NM_001182339.3"/>
</dbReference>
<dbReference type="PDB" id="2ER8">
    <property type="method" value="X-ray"/>
    <property type="resolution" value="2.85 A"/>
    <property type="chains" value="A/B/C/D=32-103"/>
</dbReference>
<dbReference type="PDB" id="2ERE">
    <property type="method" value="X-ray"/>
    <property type="resolution" value="3.00 A"/>
    <property type="chains" value="A/B=32-103"/>
</dbReference>
<dbReference type="PDB" id="2ERG">
    <property type="method" value="X-ray"/>
    <property type="resolution" value="3.15 A"/>
    <property type="chains" value="A/B=32-103"/>
</dbReference>
<dbReference type="PDBsum" id="2ER8"/>
<dbReference type="PDBsum" id="2ERE"/>
<dbReference type="PDBsum" id="2ERG"/>
<dbReference type="SMR" id="P08638"/>
<dbReference type="BioGRID" id="31709">
    <property type="interactions" value="76"/>
</dbReference>
<dbReference type="DIP" id="DIP-2400N"/>
<dbReference type="FunCoup" id="P08638">
    <property type="interactions" value="695"/>
</dbReference>
<dbReference type="IntAct" id="P08638">
    <property type="interactions" value="2"/>
</dbReference>
<dbReference type="MINT" id="P08638"/>
<dbReference type="STRING" id="4932.YLR451W"/>
<dbReference type="iPTMnet" id="P08638"/>
<dbReference type="PaxDb" id="4932-YLR451W"/>
<dbReference type="PeptideAtlas" id="P08638"/>
<dbReference type="EnsemblFungi" id="YLR451W_mRNA">
    <property type="protein sequence ID" value="YLR451W"/>
    <property type="gene ID" value="YLR451W"/>
</dbReference>
<dbReference type="GeneID" id="851172"/>
<dbReference type="KEGG" id="sce:YLR451W"/>
<dbReference type="AGR" id="SGD:S000004443"/>
<dbReference type="SGD" id="S000004443">
    <property type="gene designation" value="LEU3"/>
</dbReference>
<dbReference type="VEuPathDB" id="FungiDB:YLR451W"/>
<dbReference type="eggNOG" id="ENOG502QPVP">
    <property type="taxonomic scope" value="Eukaryota"/>
</dbReference>
<dbReference type="GeneTree" id="ENSGT00940000176683"/>
<dbReference type="HOGENOM" id="CLU_015609_0_0_1"/>
<dbReference type="InParanoid" id="P08638"/>
<dbReference type="OMA" id="MLWKDVD"/>
<dbReference type="OrthoDB" id="2341546at2759"/>
<dbReference type="BioCyc" id="YEAST:G3O-32504-MONOMER"/>
<dbReference type="BioGRID-ORCS" id="851172">
    <property type="hits" value="7 hits in 13 CRISPR screens"/>
</dbReference>
<dbReference type="EvolutionaryTrace" id="P08638"/>
<dbReference type="PRO" id="PR:P08638"/>
<dbReference type="Proteomes" id="UP000002311">
    <property type="component" value="Chromosome XII"/>
</dbReference>
<dbReference type="RNAct" id="P08638">
    <property type="molecule type" value="protein"/>
</dbReference>
<dbReference type="GO" id="GO:0005634">
    <property type="term" value="C:nucleus"/>
    <property type="evidence" value="ECO:0000314"/>
    <property type="project" value="SGD"/>
</dbReference>
<dbReference type="GO" id="GO:0001228">
    <property type="term" value="F:DNA-binding transcription activator activity, RNA polymerase II-specific"/>
    <property type="evidence" value="ECO:0000314"/>
    <property type="project" value="SGD"/>
</dbReference>
<dbReference type="GO" id="GO:0000981">
    <property type="term" value="F:DNA-binding transcription factor activity, RNA polymerase II-specific"/>
    <property type="evidence" value="ECO:0000318"/>
    <property type="project" value="GO_Central"/>
</dbReference>
<dbReference type="GO" id="GO:0001227">
    <property type="term" value="F:DNA-binding transcription repressor activity, RNA polymerase II-specific"/>
    <property type="evidence" value="ECO:0000314"/>
    <property type="project" value="SGD"/>
</dbReference>
<dbReference type="GO" id="GO:0043565">
    <property type="term" value="F:sequence-specific DNA binding"/>
    <property type="evidence" value="ECO:0007005"/>
    <property type="project" value="SGD"/>
</dbReference>
<dbReference type="GO" id="GO:0000976">
    <property type="term" value="F:transcription cis-regulatory region binding"/>
    <property type="evidence" value="ECO:0000318"/>
    <property type="project" value="GO_Central"/>
</dbReference>
<dbReference type="GO" id="GO:0008270">
    <property type="term" value="F:zinc ion binding"/>
    <property type="evidence" value="ECO:0007669"/>
    <property type="project" value="InterPro"/>
</dbReference>
<dbReference type="GO" id="GO:0009098">
    <property type="term" value="P:L-leucine biosynthetic process"/>
    <property type="evidence" value="ECO:0007669"/>
    <property type="project" value="UniProtKB-KW"/>
</dbReference>
<dbReference type="GO" id="GO:0000122">
    <property type="term" value="P:negative regulation of transcription by RNA polymerase II"/>
    <property type="evidence" value="ECO:0000314"/>
    <property type="project" value="SGD"/>
</dbReference>
<dbReference type="GO" id="GO:2001278">
    <property type="term" value="P:positive regulation of L-leucine biosynthetic process"/>
    <property type="evidence" value="ECO:0000315"/>
    <property type="project" value="SGD"/>
</dbReference>
<dbReference type="GO" id="GO:0045944">
    <property type="term" value="P:positive regulation of transcription by RNA polymerase II"/>
    <property type="evidence" value="ECO:0000314"/>
    <property type="project" value="SGD"/>
</dbReference>
<dbReference type="GO" id="GO:0006355">
    <property type="term" value="P:regulation of DNA-templated transcription"/>
    <property type="evidence" value="ECO:0000318"/>
    <property type="project" value="GO_Central"/>
</dbReference>
<dbReference type="CDD" id="cd12148">
    <property type="entry name" value="fungal_TF_MHR"/>
    <property type="match status" value="1"/>
</dbReference>
<dbReference type="CDD" id="cd00067">
    <property type="entry name" value="GAL4"/>
    <property type="match status" value="1"/>
</dbReference>
<dbReference type="FunFam" id="4.10.240.10:FF:000003">
    <property type="entry name" value="C6 transcription factor (Leu3)"/>
    <property type="match status" value="1"/>
</dbReference>
<dbReference type="Gene3D" id="4.10.240.10">
    <property type="entry name" value="Zn(2)-C6 fungal-type DNA-binding domain"/>
    <property type="match status" value="1"/>
</dbReference>
<dbReference type="InterPro" id="IPR051089">
    <property type="entry name" value="prtT"/>
</dbReference>
<dbReference type="InterPro" id="IPR036864">
    <property type="entry name" value="Zn2-C6_fun-type_DNA-bd_sf"/>
</dbReference>
<dbReference type="InterPro" id="IPR001138">
    <property type="entry name" value="Zn2Cys6_DnaBD"/>
</dbReference>
<dbReference type="PANTHER" id="PTHR31845">
    <property type="entry name" value="FINGER DOMAIN PROTEIN, PUTATIVE-RELATED"/>
    <property type="match status" value="1"/>
</dbReference>
<dbReference type="PANTHER" id="PTHR31845:SF21">
    <property type="entry name" value="REGULATORY PROTEIN LEU3"/>
    <property type="match status" value="1"/>
</dbReference>
<dbReference type="Pfam" id="PF00172">
    <property type="entry name" value="Zn_clus"/>
    <property type="match status" value="1"/>
</dbReference>
<dbReference type="SMART" id="SM00066">
    <property type="entry name" value="GAL4"/>
    <property type="match status" value="1"/>
</dbReference>
<dbReference type="SUPFAM" id="SSF57701">
    <property type="entry name" value="Zn2/Cys6 DNA-binding domain"/>
    <property type="match status" value="1"/>
</dbReference>
<dbReference type="PROSITE" id="PS00463">
    <property type="entry name" value="ZN2_CY6_FUNGAL_1"/>
    <property type="match status" value="1"/>
</dbReference>
<dbReference type="PROSITE" id="PS50048">
    <property type="entry name" value="ZN2_CY6_FUNGAL_2"/>
    <property type="match status" value="1"/>
</dbReference>
<organism>
    <name type="scientific">Saccharomyces cerevisiae (strain ATCC 204508 / S288c)</name>
    <name type="common">Baker's yeast</name>
    <dbReference type="NCBI Taxonomy" id="559292"/>
    <lineage>
        <taxon>Eukaryota</taxon>
        <taxon>Fungi</taxon>
        <taxon>Dikarya</taxon>
        <taxon>Ascomycota</taxon>
        <taxon>Saccharomycotina</taxon>
        <taxon>Saccharomycetes</taxon>
        <taxon>Saccharomycetales</taxon>
        <taxon>Saccharomycetaceae</taxon>
        <taxon>Saccharomyces</taxon>
    </lineage>
</organism>
<reference key="1">
    <citation type="journal article" date="1987" name="Nucleic Acids Res.">
        <title>Structure of yeast regulatory gene LEU3 and evidence that LEU3 itself is under general amino acid control.</title>
        <authorList>
            <person name="Zhou K."/>
            <person name="Brisco P.R.G."/>
            <person name="Hinkkanen A.E."/>
            <person name="Kohlhaw G.B."/>
        </authorList>
    </citation>
    <scope>NUCLEOTIDE SEQUENCE [GENOMIC DNA]</scope>
</reference>
<reference key="2">
    <citation type="journal article" date="1987" name="Mol. Cell. Biol.">
        <title>LEU3 of Saccharomyces cerevisiae encodes a factor for control of RNA levels of a group of leucine-specific genes.</title>
        <authorList>
            <person name="Friden P."/>
            <person name="Schimmel P."/>
        </authorList>
    </citation>
    <scope>NUCLEOTIDE SEQUENCE [GENOMIC DNA]</scope>
</reference>
<reference key="3">
    <citation type="journal article" date="1997" name="Nature">
        <title>The nucleotide sequence of Saccharomyces cerevisiae chromosome XII.</title>
        <authorList>
            <person name="Johnston M."/>
            <person name="Hillier L.W."/>
            <person name="Riles L."/>
            <person name="Albermann K."/>
            <person name="Andre B."/>
            <person name="Ansorge W."/>
            <person name="Benes V."/>
            <person name="Brueckner M."/>
            <person name="Delius H."/>
            <person name="Dubois E."/>
            <person name="Duesterhoeft A."/>
            <person name="Entian K.-D."/>
            <person name="Floeth M."/>
            <person name="Goffeau A."/>
            <person name="Hebling U."/>
            <person name="Heumann K."/>
            <person name="Heuss-Neitzel D."/>
            <person name="Hilbert H."/>
            <person name="Hilger F."/>
            <person name="Kleine K."/>
            <person name="Koetter P."/>
            <person name="Louis E.J."/>
            <person name="Messenguy F."/>
            <person name="Mewes H.-W."/>
            <person name="Miosga T."/>
            <person name="Moestl D."/>
            <person name="Mueller-Auer S."/>
            <person name="Nentwich U."/>
            <person name="Obermaier B."/>
            <person name="Piravandi E."/>
            <person name="Pohl T.M."/>
            <person name="Portetelle D."/>
            <person name="Purnelle B."/>
            <person name="Rechmann S."/>
            <person name="Rieger M."/>
            <person name="Rinke M."/>
            <person name="Rose M."/>
            <person name="Scharfe M."/>
            <person name="Scherens B."/>
            <person name="Scholler P."/>
            <person name="Schwager C."/>
            <person name="Schwarz S."/>
            <person name="Underwood A.P."/>
            <person name="Urrestarazu L.A."/>
            <person name="Vandenbol M."/>
            <person name="Verhasselt P."/>
            <person name="Vierendeels F."/>
            <person name="Voet M."/>
            <person name="Volckaert G."/>
            <person name="Voss H."/>
            <person name="Wambutt R."/>
            <person name="Wedler E."/>
            <person name="Wedler H."/>
            <person name="Zimmermann F.K."/>
            <person name="Zollner A."/>
            <person name="Hani J."/>
            <person name="Hoheisel J.D."/>
        </authorList>
    </citation>
    <scope>NUCLEOTIDE SEQUENCE [LARGE SCALE GENOMIC DNA]</scope>
    <source>
        <strain>ATCC 204508 / S288c</strain>
    </source>
</reference>
<reference key="4">
    <citation type="journal article" date="2014" name="G3 (Bethesda)">
        <title>The reference genome sequence of Saccharomyces cerevisiae: Then and now.</title>
        <authorList>
            <person name="Engel S.R."/>
            <person name="Dietrich F.S."/>
            <person name="Fisk D.G."/>
            <person name="Binkley G."/>
            <person name="Balakrishnan R."/>
            <person name="Costanzo M.C."/>
            <person name="Dwight S.S."/>
            <person name="Hitz B.C."/>
            <person name="Karra K."/>
            <person name="Nash R.S."/>
            <person name="Weng S."/>
            <person name="Wong E.D."/>
            <person name="Lloyd P."/>
            <person name="Skrzypek M.S."/>
            <person name="Miyasato S.R."/>
            <person name="Simison M."/>
            <person name="Cherry J.M."/>
        </authorList>
    </citation>
    <scope>GENOME REANNOTATION</scope>
    <source>
        <strain>ATCC 204508 / S288c</strain>
    </source>
</reference>
<reference key="5">
    <citation type="journal article" date="2003" name="Nature">
        <title>Global analysis of protein expression in yeast.</title>
        <authorList>
            <person name="Ghaemmaghami S."/>
            <person name="Huh W.-K."/>
            <person name="Bower K."/>
            <person name="Howson R.W."/>
            <person name="Belle A."/>
            <person name="Dephoure N."/>
            <person name="O'Shea E.K."/>
            <person name="Weissman J.S."/>
        </authorList>
    </citation>
    <scope>LEVEL OF PROTEIN EXPRESSION [LARGE SCALE ANALYSIS]</scope>
</reference>
<reference key="6">
    <citation type="journal article" date="2007" name="Genomics">
        <title>Nine-amino-acid transactivation domain: establishment and prediction utilities.</title>
        <authorList>
            <person name="Piskacek S."/>
            <person name="Gregor M."/>
            <person name="Nemethova M."/>
            <person name="Grabner M."/>
            <person name="Kovarik P."/>
            <person name="Piskacek M."/>
        </authorList>
    </citation>
    <scope>DOMAIN</scope>
</reference>
<reference key="7">
    <citation type="journal article" date="2009" name="Science">
        <title>Global analysis of Cdk1 substrate phosphorylation sites provides insights into evolution.</title>
        <authorList>
            <person name="Holt L.J."/>
            <person name="Tuch B.B."/>
            <person name="Villen J."/>
            <person name="Johnson A.D."/>
            <person name="Gygi S.P."/>
            <person name="Morgan D.O."/>
        </authorList>
    </citation>
    <scope>IDENTIFICATION BY MASS SPECTROMETRY [LARGE SCALE ANALYSIS]</scope>
</reference>
<protein>
    <recommendedName>
        <fullName>Regulatory protein LEU3</fullName>
    </recommendedName>
</protein>
<keyword id="KW-0002">3D-structure</keyword>
<keyword id="KW-0010">Activator</keyword>
<keyword id="KW-0028">Amino-acid biosynthesis</keyword>
<keyword id="KW-0100">Branched-chain amino acid biosynthesis</keyword>
<keyword id="KW-0238">DNA-binding</keyword>
<keyword id="KW-0432">Leucine biosynthesis</keyword>
<keyword id="KW-0479">Metal-binding</keyword>
<keyword id="KW-0539">Nucleus</keyword>
<keyword id="KW-1185">Reference proteome</keyword>
<keyword id="KW-0804">Transcription</keyword>
<keyword id="KW-0805">Transcription regulation</keyword>
<keyword id="KW-0862">Zinc</keyword>
<feature type="chain" id="PRO_0000114954" description="Regulatory protein LEU3">
    <location>
        <begin position="1"/>
        <end position="886"/>
    </location>
</feature>
<feature type="DNA-binding region" description="Zn(2)-C6 fungal-type" evidence="1">
    <location>
        <begin position="37"/>
        <end position="67"/>
    </location>
</feature>
<feature type="region of interest" description="Disordered" evidence="2">
    <location>
        <begin position="1"/>
        <end position="28"/>
    </location>
</feature>
<feature type="region of interest" description="Disordered" evidence="2">
    <location>
        <begin position="673"/>
        <end position="709"/>
    </location>
</feature>
<feature type="region of interest" description="Disordered" evidence="2">
    <location>
        <begin position="734"/>
        <end position="756"/>
    </location>
</feature>
<feature type="short sequence motif" description="9aaTAD">
    <location>
        <begin position="874"/>
        <end position="882"/>
    </location>
</feature>
<feature type="compositionally biased region" description="Polar residues" evidence="2">
    <location>
        <begin position="8"/>
        <end position="17"/>
    </location>
</feature>
<feature type="compositionally biased region" description="Acidic residues" evidence="2">
    <location>
        <begin position="677"/>
        <end position="697"/>
    </location>
</feature>
<feature type="compositionally biased region" description="Low complexity" evidence="2">
    <location>
        <begin position="743"/>
        <end position="753"/>
    </location>
</feature>
<feature type="sequence conflict" description="In Ref. 2; AAA34741." evidence="5" ref="2">
    <original>M</original>
    <variation>I</variation>
    <location>
        <position position="504"/>
    </location>
</feature>
<feature type="helix" evidence="6">
    <location>
        <begin position="38"/>
        <end position="42"/>
    </location>
</feature>
<feature type="helix" evidence="6">
    <location>
        <begin position="50"/>
        <end position="52"/>
    </location>
</feature>
<feature type="helix" evidence="6">
    <location>
        <begin position="58"/>
        <end position="62"/>
    </location>
</feature>
<feature type="helix" evidence="6">
    <location>
        <begin position="78"/>
        <end position="97"/>
    </location>
</feature>
<proteinExistence type="evidence at protein level"/>
<gene>
    <name type="primary">LEU3</name>
    <name type="ordered locus">YLR451W</name>
    <name type="ORF">L9324.1</name>
</gene>
<comment type="function">
    <text>Factor for control of RNA levels of a group of leucine-specific genes.</text>
</comment>
<comment type="subcellular location">
    <subcellularLocation>
        <location>Nucleus</location>
    </subcellularLocation>
</comment>
<comment type="domain">
    <text evidence="4">The 9aaTAD motif is a transactivation domain present in a large number of yeast and animal transcription factors.</text>
</comment>
<comment type="miscellaneous">
    <text evidence="3">Present with 125 molecules/cell in log phase SD medium.</text>
</comment>
<name>LEUR_YEAST</name>
<evidence type="ECO:0000255" key="1">
    <source>
        <dbReference type="PROSITE-ProRule" id="PRU00227"/>
    </source>
</evidence>
<evidence type="ECO:0000256" key="2">
    <source>
        <dbReference type="SAM" id="MobiDB-lite"/>
    </source>
</evidence>
<evidence type="ECO:0000269" key="3">
    <source>
    </source>
</evidence>
<evidence type="ECO:0000269" key="4">
    <source>
    </source>
</evidence>
<evidence type="ECO:0000305" key="5"/>
<evidence type="ECO:0007829" key="6">
    <source>
        <dbReference type="PDB" id="2ER8"/>
    </source>
</evidence>